<keyword id="KW-0687">Ribonucleoprotein</keyword>
<keyword id="KW-0689">Ribosomal protein</keyword>
<keyword id="KW-0694">RNA-binding</keyword>
<keyword id="KW-0699">rRNA-binding</keyword>
<organism>
    <name type="scientific">Escherichia coli O81 (strain ED1a)</name>
    <dbReference type="NCBI Taxonomy" id="585397"/>
    <lineage>
        <taxon>Bacteria</taxon>
        <taxon>Pseudomonadati</taxon>
        <taxon>Pseudomonadota</taxon>
        <taxon>Gammaproteobacteria</taxon>
        <taxon>Enterobacterales</taxon>
        <taxon>Enterobacteriaceae</taxon>
        <taxon>Escherichia</taxon>
    </lineage>
</organism>
<reference key="1">
    <citation type="journal article" date="2009" name="PLoS Genet.">
        <title>Organised genome dynamics in the Escherichia coli species results in highly diverse adaptive paths.</title>
        <authorList>
            <person name="Touchon M."/>
            <person name="Hoede C."/>
            <person name="Tenaillon O."/>
            <person name="Barbe V."/>
            <person name="Baeriswyl S."/>
            <person name="Bidet P."/>
            <person name="Bingen E."/>
            <person name="Bonacorsi S."/>
            <person name="Bouchier C."/>
            <person name="Bouvet O."/>
            <person name="Calteau A."/>
            <person name="Chiapello H."/>
            <person name="Clermont O."/>
            <person name="Cruveiller S."/>
            <person name="Danchin A."/>
            <person name="Diard M."/>
            <person name="Dossat C."/>
            <person name="Karoui M.E."/>
            <person name="Frapy E."/>
            <person name="Garry L."/>
            <person name="Ghigo J.M."/>
            <person name="Gilles A.M."/>
            <person name="Johnson J."/>
            <person name="Le Bouguenec C."/>
            <person name="Lescat M."/>
            <person name="Mangenot S."/>
            <person name="Martinez-Jehanne V."/>
            <person name="Matic I."/>
            <person name="Nassif X."/>
            <person name="Oztas S."/>
            <person name="Petit M.A."/>
            <person name="Pichon C."/>
            <person name="Rouy Z."/>
            <person name="Ruf C.S."/>
            <person name="Schneider D."/>
            <person name="Tourret J."/>
            <person name="Vacherie B."/>
            <person name="Vallenet D."/>
            <person name="Medigue C."/>
            <person name="Rocha E.P.C."/>
            <person name="Denamur E."/>
        </authorList>
    </citation>
    <scope>NUCLEOTIDE SEQUENCE [LARGE SCALE GENOMIC DNA]</scope>
    <source>
        <strain>ED1a</strain>
    </source>
</reference>
<proteinExistence type="inferred from homology"/>
<feature type="chain" id="PRO_1000166006" description="Large ribosomal subunit protein uL4">
    <location>
        <begin position="1"/>
        <end position="201"/>
    </location>
</feature>
<feature type="region of interest" description="Disordered" evidence="2">
    <location>
        <begin position="44"/>
        <end position="71"/>
    </location>
</feature>
<comment type="function">
    <text evidence="1">One of the primary rRNA binding proteins, this protein initially binds near the 5'-end of the 23S rRNA. It is important during the early stages of 50S assembly. It makes multiple contacts with different domains of the 23S rRNA in the assembled 50S subunit and ribosome.</text>
</comment>
<comment type="function">
    <text evidence="1">Forms part of the polypeptide exit tunnel.</text>
</comment>
<comment type="subunit">
    <text evidence="1">Part of the 50S ribosomal subunit.</text>
</comment>
<comment type="similarity">
    <text evidence="1">Belongs to the universal ribosomal protein uL4 family.</text>
</comment>
<sequence length="201" mass="22087">MELVLKDAQSALTVSETTFGRDFNEALVHQVVVAYAAGARQGTRAQKTRAEVTGSGKKPWRQKGTGRARSGSIKSPIWRSGGVTFAARPQDHSQKVNKKMYRGALKSILSELVRQDRLIVVEKFSVEAPKTKLLAQKLKDMALEDVLIITGELDENLFLAARNLHKVDVRDATGIDPVSLIAFDKVVMTADAVKQVEEMLA</sequence>
<protein>
    <recommendedName>
        <fullName evidence="1">Large ribosomal subunit protein uL4</fullName>
    </recommendedName>
    <alternativeName>
        <fullName evidence="3">50S ribosomal protein L4</fullName>
    </alternativeName>
</protein>
<name>RL4_ECO81</name>
<gene>
    <name evidence="1" type="primary">rplD</name>
    <name type="ordered locus">ECED1_3982</name>
</gene>
<dbReference type="EMBL" id="CU928162">
    <property type="protein sequence ID" value="CAR10121.2"/>
    <property type="molecule type" value="Genomic_DNA"/>
</dbReference>
<dbReference type="RefSeq" id="WP_000424395.1">
    <property type="nucleotide sequence ID" value="NC_011745.1"/>
</dbReference>
<dbReference type="SMR" id="B7N1A3"/>
<dbReference type="GeneID" id="97442859"/>
<dbReference type="KEGG" id="ecq:ECED1_3982"/>
<dbReference type="HOGENOM" id="CLU_041575_5_2_6"/>
<dbReference type="Proteomes" id="UP000000748">
    <property type="component" value="Chromosome"/>
</dbReference>
<dbReference type="GO" id="GO:1990904">
    <property type="term" value="C:ribonucleoprotein complex"/>
    <property type="evidence" value="ECO:0007669"/>
    <property type="project" value="UniProtKB-KW"/>
</dbReference>
<dbReference type="GO" id="GO:0005840">
    <property type="term" value="C:ribosome"/>
    <property type="evidence" value="ECO:0007669"/>
    <property type="project" value="UniProtKB-KW"/>
</dbReference>
<dbReference type="GO" id="GO:0019843">
    <property type="term" value="F:rRNA binding"/>
    <property type="evidence" value="ECO:0007669"/>
    <property type="project" value="UniProtKB-UniRule"/>
</dbReference>
<dbReference type="GO" id="GO:0003735">
    <property type="term" value="F:structural constituent of ribosome"/>
    <property type="evidence" value="ECO:0007669"/>
    <property type="project" value="InterPro"/>
</dbReference>
<dbReference type="GO" id="GO:0006412">
    <property type="term" value="P:translation"/>
    <property type="evidence" value="ECO:0007669"/>
    <property type="project" value="UniProtKB-UniRule"/>
</dbReference>
<dbReference type="FunFam" id="3.40.1370.10:FF:000001">
    <property type="entry name" value="50S ribosomal protein L4"/>
    <property type="match status" value="1"/>
</dbReference>
<dbReference type="Gene3D" id="3.40.1370.10">
    <property type="match status" value="1"/>
</dbReference>
<dbReference type="HAMAP" id="MF_01328_B">
    <property type="entry name" value="Ribosomal_uL4_B"/>
    <property type="match status" value="1"/>
</dbReference>
<dbReference type="InterPro" id="IPR002136">
    <property type="entry name" value="Ribosomal_uL4"/>
</dbReference>
<dbReference type="InterPro" id="IPR013005">
    <property type="entry name" value="Ribosomal_uL4-like"/>
</dbReference>
<dbReference type="InterPro" id="IPR023574">
    <property type="entry name" value="Ribosomal_uL4_dom_sf"/>
</dbReference>
<dbReference type="NCBIfam" id="TIGR03953">
    <property type="entry name" value="rplD_bact"/>
    <property type="match status" value="1"/>
</dbReference>
<dbReference type="PANTHER" id="PTHR10746">
    <property type="entry name" value="50S RIBOSOMAL PROTEIN L4"/>
    <property type="match status" value="1"/>
</dbReference>
<dbReference type="PANTHER" id="PTHR10746:SF6">
    <property type="entry name" value="LARGE RIBOSOMAL SUBUNIT PROTEIN UL4M"/>
    <property type="match status" value="1"/>
</dbReference>
<dbReference type="Pfam" id="PF00573">
    <property type="entry name" value="Ribosomal_L4"/>
    <property type="match status" value="1"/>
</dbReference>
<dbReference type="SUPFAM" id="SSF52166">
    <property type="entry name" value="Ribosomal protein L4"/>
    <property type="match status" value="1"/>
</dbReference>
<accession>B7N1A3</accession>
<evidence type="ECO:0000255" key="1">
    <source>
        <dbReference type="HAMAP-Rule" id="MF_01328"/>
    </source>
</evidence>
<evidence type="ECO:0000256" key="2">
    <source>
        <dbReference type="SAM" id="MobiDB-lite"/>
    </source>
</evidence>
<evidence type="ECO:0000305" key="3"/>